<keyword id="KW-0963">Cytoplasm</keyword>
<keyword id="KW-0328">Glycosyltransferase</keyword>
<keyword id="KW-0660">Purine salvage</keyword>
<keyword id="KW-0808">Transferase</keyword>
<reference key="1">
    <citation type="journal article" date="2009" name="Genome Biol.">
        <title>Genomic and genetic analyses of diversity and plant interactions of Pseudomonas fluorescens.</title>
        <authorList>
            <person name="Silby M.W."/>
            <person name="Cerdeno-Tarraga A.M."/>
            <person name="Vernikos G.S."/>
            <person name="Giddens S.R."/>
            <person name="Jackson R.W."/>
            <person name="Preston G.M."/>
            <person name="Zhang X.-X."/>
            <person name="Moon C.D."/>
            <person name="Gehrig S.M."/>
            <person name="Godfrey S.A.C."/>
            <person name="Knight C.G."/>
            <person name="Malone J.G."/>
            <person name="Robinson Z."/>
            <person name="Spiers A.J."/>
            <person name="Harris S."/>
            <person name="Challis G.L."/>
            <person name="Yaxley A.M."/>
            <person name="Harris D."/>
            <person name="Seeger K."/>
            <person name="Murphy L."/>
            <person name="Rutter S."/>
            <person name="Squares R."/>
            <person name="Quail M.A."/>
            <person name="Saunders E."/>
            <person name="Mavromatis K."/>
            <person name="Brettin T.S."/>
            <person name="Bentley S.D."/>
            <person name="Hothersall J."/>
            <person name="Stephens E."/>
            <person name="Thomas C.M."/>
            <person name="Parkhill J."/>
            <person name="Levy S.B."/>
            <person name="Rainey P.B."/>
            <person name="Thomson N.R."/>
        </authorList>
    </citation>
    <scope>NUCLEOTIDE SEQUENCE [LARGE SCALE GENOMIC DNA]</scope>
    <source>
        <strain>SBW25</strain>
    </source>
</reference>
<proteinExistence type="inferred from homology"/>
<gene>
    <name evidence="1" type="primary">xpt</name>
    <name type="ordered locus">PFLU_5962</name>
</gene>
<protein>
    <recommendedName>
        <fullName evidence="1">Xanthine phosphoribosyltransferase</fullName>
        <shortName evidence="1">XPRTase</shortName>
        <ecNumber evidence="1">2.4.2.22</ecNumber>
    </recommendedName>
</protein>
<evidence type="ECO:0000255" key="1">
    <source>
        <dbReference type="HAMAP-Rule" id="MF_01184"/>
    </source>
</evidence>
<accession>C3K452</accession>
<comment type="function">
    <text evidence="1">Converts the preformed base xanthine, a product of nucleic acid breakdown, to xanthosine 5'-monophosphate (XMP), so it can be reused for RNA or DNA synthesis.</text>
</comment>
<comment type="catalytic activity">
    <reaction evidence="1">
        <text>XMP + diphosphate = xanthine + 5-phospho-alpha-D-ribose 1-diphosphate</text>
        <dbReference type="Rhea" id="RHEA:10800"/>
        <dbReference type="ChEBI" id="CHEBI:17712"/>
        <dbReference type="ChEBI" id="CHEBI:33019"/>
        <dbReference type="ChEBI" id="CHEBI:57464"/>
        <dbReference type="ChEBI" id="CHEBI:58017"/>
        <dbReference type="EC" id="2.4.2.22"/>
    </reaction>
</comment>
<comment type="pathway">
    <text evidence="1">Purine metabolism; XMP biosynthesis via salvage pathway; XMP from xanthine: step 1/1.</text>
</comment>
<comment type="subunit">
    <text evidence="1">Homodimer.</text>
</comment>
<comment type="subcellular location">
    <subcellularLocation>
        <location evidence="1">Cytoplasm</location>
    </subcellularLocation>
</comment>
<comment type="similarity">
    <text evidence="1">Belongs to the purine/pyrimidine phosphoribosyltransferase family. Xpt subfamily.</text>
</comment>
<sequence>MEALHKKIREEGIVLSDQVLKVDAFLNHQIDPALMKLIGDEFAALFKDSGITKIVTIEASGIAPAIMTGLNLGVPVIFARKQQSLTLTENLLSATVYSFTKKTESTVAISPRHLTSSDRVLVIDDFLANGKASQALISIIKQAGATVAGLGIVIEKSFQGGRAELDAQGYRVESLARVKSLAGGVVTFIE</sequence>
<dbReference type="EC" id="2.4.2.22" evidence="1"/>
<dbReference type="EMBL" id="AM181176">
    <property type="protein sequence ID" value="CAY53472.1"/>
    <property type="molecule type" value="Genomic_DNA"/>
</dbReference>
<dbReference type="RefSeq" id="WP_003195447.1">
    <property type="nucleotide sequence ID" value="NC_012660.1"/>
</dbReference>
<dbReference type="SMR" id="C3K452"/>
<dbReference type="STRING" id="294.SRM1_05656"/>
<dbReference type="eggNOG" id="COG0503">
    <property type="taxonomic scope" value="Bacteria"/>
</dbReference>
<dbReference type="HOGENOM" id="CLU_099015_0_0_6"/>
<dbReference type="OrthoDB" id="9790678at2"/>
<dbReference type="UniPathway" id="UPA00602">
    <property type="reaction ID" value="UER00658"/>
</dbReference>
<dbReference type="GO" id="GO:0005737">
    <property type="term" value="C:cytoplasm"/>
    <property type="evidence" value="ECO:0007669"/>
    <property type="project" value="UniProtKB-SubCell"/>
</dbReference>
<dbReference type="GO" id="GO:0000310">
    <property type="term" value="F:xanthine phosphoribosyltransferase activity"/>
    <property type="evidence" value="ECO:0007669"/>
    <property type="project" value="UniProtKB-UniRule"/>
</dbReference>
<dbReference type="GO" id="GO:0006166">
    <property type="term" value="P:purine ribonucleoside salvage"/>
    <property type="evidence" value="ECO:0007669"/>
    <property type="project" value="UniProtKB-KW"/>
</dbReference>
<dbReference type="GO" id="GO:0046110">
    <property type="term" value="P:xanthine metabolic process"/>
    <property type="evidence" value="ECO:0007669"/>
    <property type="project" value="InterPro"/>
</dbReference>
<dbReference type="GO" id="GO:0032265">
    <property type="term" value="P:XMP salvage"/>
    <property type="evidence" value="ECO:0007669"/>
    <property type="project" value="UniProtKB-UniRule"/>
</dbReference>
<dbReference type="CDD" id="cd06223">
    <property type="entry name" value="PRTases_typeI"/>
    <property type="match status" value="1"/>
</dbReference>
<dbReference type="FunFam" id="3.40.50.2020:FF:000027">
    <property type="entry name" value="Xanthine phosphoribosyltransferase"/>
    <property type="match status" value="1"/>
</dbReference>
<dbReference type="Gene3D" id="3.40.50.2020">
    <property type="match status" value="1"/>
</dbReference>
<dbReference type="HAMAP" id="MF_01184">
    <property type="entry name" value="XPRTase"/>
    <property type="match status" value="1"/>
</dbReference>
<dbReference type="InterPro" id="IPR000836">
    <property type="entry name" value="PRibTrfase_dom"/>
</dbReference>
<dbReference type="InterPro" id="IPR029057">
    <property type="entry name" value="PRTase-like"/>
</dbReference>
<dbReference type="InterPro" id="IPR050118">
    <property type="entry name" value="Pur/Pyrimidine_PRTase"/>
</dbReference>
<dbReference type="InterPro" id="IPR010079">
    <property type="entry name" value="Xanthine_PRibTrfase"/>
</dbReference>
<dbReference type="NCBIfam" id="NF006671">
    <property type="entry name" value="PRK09219.1"/>
    <property type="match status" value="1"/>
</dbReference>
<dbReference type="NCBIfam" id="TIGR01744">
    <property type="entry name" value="XPRTase"/>
    <property type="match status" value="1"/>
</dbReference>
<dbReference type="PANTHER" id="PTHR43864">
    <property type="entry name" value="HYPOXANTHINE/GUANINE PHOSPHORIBOSYLTRANSFERASE"/>
    <property type="match status" value="1"/>
</dbReference>
<dbReference type="PANTHER" id="PTHR43864:SF1">
    <property type="entry name" value="XANTHINE PHOSPHORIBOSYLTRANSFERASE"/>
    <property type="match status" value="1"/>
</dbReference>
<dbReference type="SUPFAM" id="SSF53271">
    <property type="entry name" value="PRTase-like"/>
    <property type="match status" value="1"/>
</dbReference>
<name>XPT_PSEFS</name>
<feature type="chain" id="PRO_1000213770" description="Xanthine phosphoribosyltransferase">
    <location>
        <begin position="1"/>
        <end position="190"/>
    </location>
</feature>
<feature type="binding site" evidence="1">
    <location>
        <position position="20"/>
    </location>
    <ligand>
        <name>xanthine</name>
        <dbReference type="ChEBI" id="CHEBI:17712"/>
    </ligand>
</feature>
<feature type="binding site" evidence="1">
    <location>
        <position position="27"/>
    </location>
    <ligand>
        <name>xanthine</name>
        <dbReference type="ChEBI" id="CHEBI:17712"/>
    </ligand>
</feature>
<feature type="binding site" evidence="1">
    <location>
        <begin position="128"/>
        <end position="132"/>
    </location>
    <ligand>
        <name>5-phospho-alpha-D-ribose 1-diphosphate</name>
        <dbReference type="ChEBI" id="CHEBI:58017"/>
    </ligand>
</feature>
<feature type="binding site" evidence="1">
    <location>
        <position position="156"/>
    </location>
    <ligand>
        <name>xanthine</name>
        <dbReference type="ChEBI" id="CHEBI:17712"/>
    </ligand>
</feature>
<organism>
    <name type="scientific">Pseudomonas fluorescens (strain SBW25)</name>
    <dbReference type="NCBI Taxonomy" id="216595"/>
    <lineage>
        <taxon>Bacteria</taxon>
        <taxon>Pseudomonadati</taxon>
        <taxon>Pseudomonadota</taxon>
        <taxon>Gammaproteobacteria</taxon>
        <taxon>Pseudomonadales</taxon>
        <taxon>Pseudomonadaceae</taxon>
        <taxon>Pseudomonas</taxon>
    </lineage>
</organism>